<accession>P53152</accession>
<accession>D6VU57</accession>
<sequence>MSKVPRNFRLLEELEKGEKGFGPESCSYGLADSDDITMTKWNGTILGPPHSNHENRIYSLSIDCGPNYPDSPPKVTFISKINLPCVNPTTGEVQTDFHTLRDWKRAYTMETLLLDLRKEMATPANKKLRQPKEGETF</sequence>
<feature type="chain" id="PRO_0000082598" description="Ubiquitin-conjugating enzyme variant MMS2">
    <location>
        <begin position="1"/>
        <end position="137"/>
    </location>
</feature>
<feature type="domain" description="UBC core" evidence="1">
    <location>
        <begin position="5"/>
        <end position="137"/>
    </location>
</feature>
<feature type="modified residue" description="Phosphoserine" evidence="4">
    <location>
        <position position="71"/>
    </location>
</feature>
<feature type="mutagenesis site" description="Strongly reduces UBC13 binding and interferes with error-free DNA repair." evidence="2">
    <original>F</original>
    <variation>A</variation>
    <location>
        <position position="8"/>
    </location>
</feature>
<feature type="helix" evidence="5">
    <location>
        <begin position="6"/>
        <end position="18"/>
    </location>
</feature>
<feature type="strand" evidence="5">
    <location>
        <begin position="26"/>
        <end position="32"/>
    </location>
</feature>
<feature type="strand" evidence="5">
    <location>
        <begin position="40"/>
        <end position="46"/>
    </location>
</feature>
<feature type="strand" evidence="5">
    <location>
        <begin position="49"/>
        <end position="51"/>
    </location>
</feature>
<feature type="turn" evidence="5">
    <location>
        <begin position="52"/>
        <end position="55"/>
    </location>
</feature>
<feature type="strand" evidence="5">
    <location>
        <begin position="57"/>
        <end position="63"/>
    </location>
</feature>
<feature type="turn" evidence="5">
    <location>
        <begin position="66"/>
        <end position="70"/>
    </location>
</feature>
<feature type="strand" evidence="5">
    <location>
        <begin position="74"/>
        <end position="79"/>
    </location>
</feature>
<feature type="strand" evidence="6">
    <location>
        <begin position="84"/>
        <end position="86"/>
    </location>
</feature>
<feature type="turn" evidence="5">
    <location>
        <begin position="88"/>
        <end position="90"/>
    </location>
</feature>
<feature type="helix" evidence="5">
    <location>
        <begin position="98"/>
        <end position="101"/>
    </location>
</feature>
<feature type="helix" evidence="5">
    <location>
        <begin position="109"/>
        <end position="120"/>
    </location>
</feature>
<feature type="helix" evidence="5">
    <location>
        <begin position="123"/>
        <end position="126"/>
    </location>
</feature>
<keyword id="KW-0002">3D-structure</keyword>
<keyword id="KW-0436">Ligase</keyword>
<keyword id="KW-0597">Phosphoprotein</keyword>
<keyword id="KW-1185">Reference proteome</keyword>
<keyword id="KW-0833">Ubl conjugation pathway</keyword>
<dbReference type="EMBL" id="U66724">
    <property type="protein sequence ID" value="AAC24241.1"/>
    <property type="molecule type" value="Genomic_DNA"/>
</dbReference>
<dbReference type="EMBL" id="Z72609">
    <property type="protein sequence ID" value="CAA96792.1"/>
    <property type="molecule type" value="Genomic_DNA"/>
</dbReference>
<dbReference type="EMBL" id="BK006941">
    <property type="protein sequence ID" value="DAA08018.1"/>
    <property type="molecule type" value="Genomic_DNA"/>
</dbReference>
<dbReference type="PIR" id="S64094">
    <property type="entry name" value="S64094"/>
</dbReference>
<dbReference type="RefSeq" id="NP_011428.1">
    <property type="nucleotide sequence ID" value="NM_001180952.1"/>
</dbReference>
<dbReference type="PDB" id="1JAT">
    <property type="method" value="X-ray"/>
    <property type="resolution" value="1.60 A"/>
    <property type="chains" value="B=1-137"/>
</dbReference>
<dbReference type="PDB" id="2GMI">
    <property type="method" value="X-ray"/>
    <property type="resolution" value="2.50 A"/>
    <property type="chains" value="B=1-137"/>
</dbReference>
<dbReference type="PDB" id="5OJW">
    <property type="method" value="X-ray"/>
    <property type="resolution" value="2.00 A"/>
    <property type="chains" value="B=1-137"/>
</dbReference>
<dbReference type="PDBsum" id="1JAT"/>
<dbReference type="PDBsum" id="2GMI"/>
<dbReference type="PDBsum" id="5OJW"/>
<dbReference type="SMR" id="P53152"/>
<dbReference type="BioGRID" id="33163">
    <property type="interactions" value="278"/>
</dbReference>
<dbReference type="ComplexPortal" id="CPX-2541">
    <property type="entry name" value="MMS2-UBC13 ubiquitin ligase complex"/>
</dbReference>
<dbReference type="DIP" id="DIP-5829N"/>
<dbReference type="FunCoup" id="P53152">
    <property type="interactions" value="1340"/>
</dbReference>
<dbReference type="IntAct" id="P53152">
    <property type="interactions" value="12"/>
</dbReference>
<dbReference type="MINT" id="P53152"/>
<dbReference type="STRING" id="4932.YGL087C"/>
<dbReference type="iPTMnet" id="P53152"/>
<dbReference type="PaxDb" id="4932-YGL087C"/>
<dbReference type="PeptideAtlas" id="P53152"/>
<dbReference type="EnsemblFungi" id="YGL087C_mRNA">
    <property type="protein sequence ID" value="YGL087C"/>
    <property type="gene ID" value="YGL087C"/>
</dbReference>
<dbReference type="GeneID" id="852793"/>
<dbReference type="KEGG" id="sce:YGL087C"/>
<dbReference type="AGR" id="SGD:S000003055"/>
<dbReference type="SGD" id="S000003055">
    <property type="gene designation" value="MMS2"/>
</dbReference>
<dbReference type="VEuPathDB" id="FungiDB:YGL087C"/>
<dbReference type="eggNOG" id="KOG0896">
    <property type="taxonomic scope" value="Eukaryota"/>
</dbReference>
<dbReference type="HOGENOM" id="CLU_063065_4_0_1"/>
<dbReference type="InParanoid" id="P53152"/>
<dbReference type="OMA" id="GPESCSY"/>
<dbReference type="OrthoDB" id="6508832at2759"/>
<dbReference type="BioCyc" id="YEAST:G3O-30588-MONOMER"/>
<dbReference type="Reactome" id="R-SCE-5205685">
    <property type="pathway name" value="PINK1-PRKN Mediated Mitophagy"/>
</dbReference>
<dbReference type="Reactome" id="R-SCE-5693565">
    <property type="pathway name" value="Recruitment and ATM-mediated phosphorylation of repair and signaling proteins at DNA double strand breaks"/>
</dbReference>
<dbReference type="Reactome" id="R-SCE-8866654">
    <property type="pathway name" value="E3 ubiquitin ligases ubiquitinate target proteins"/>
</dbReference>
<dbReference type="Reactome" id="R-SCE-9020702">
    <property type="pathway name" value="Interleukin-1 signaling"/>
</dbReference>
<dbReference type="Reactome" id="R-SCE-9646399">
    <property type="pathway name" value="Aggrephagy"/>
</dbReference>
<dbReference type="Reactome" id="R-SCE-983168">
    <property type="pathway name" value="Antigen processing: Ubiquitination &amp; Proteasome degradation"/>
</dbReference>
<dbReference type="BioGRID-ORCS" id="852793">
    <property type="hits" value="0 hits in 10 CRISPR screens"/>
</dbReference>
<dbReference type="EvolutionaryTrace" id="P53152"/>
<dbReference type="PRO" id="PR:P53152"/>
<dbReference type="Proteomes" id="UP000002311">
    <property type="component" value="Chromosome VII"/>
</dbReference>
<dbReference type="RNAct" id="P53152">
    <property type="molecule type" value="protein"/>
</dbReference>
<dbReference type="GO" id="GO:0005737">
    <property type="term" value="C:cytoplasm"/>
    <property type="evidence" value="ECO:0000314"/>
    <property type="project" value="SGD"/>
</dbReference>
<dbReference type="GO" id="GO:0005829">
    <property type="term" value="C:cytosol"/>
    <property type="evidence" value="ECO:0000304"/>
    <property type="project" value="Reactome"/>
</dbReference>
<dbReference type="GO" id="GO:0000329">
    <property type="term" value="C:fungal-type vacuole membrane"/>
    <property type="evidence" value="ECO:0000314"/>
    <property type="project" value="SGD"/>
</dbReference>
<dbReference type="GO" id="GO:0005634">
    <property type="term" value="C:nucleus"/>
    <property type="evidence" value="ECO:0000314"/>
    <property type="project" value="SGD"/>
</dbReference>
<dbReference type="GO" id="GO:0031371">
    <property type="term" value="C:ubiquitin conjugating enzyme complex"/>
    <property type="evidence" value="ECO:0000353"/>
    <property type="project" value="SGD"/>
</dbReference>
<dbReference type="GO" id="GO:0016874">
    <property type="term" value="F:ligase activity"/>
    <property type="evidence" value="ECO:0007669"/>
    <property type="project" value="UniProtKB-KW"/>
</dbReference>
<dbReference type="GO" id="GO:0010994">
    <property type="term" value="P:free ubiquitin chain polymerization"/>
    <property type="evidence" value="ECO:0000314"/>
    <property type="project" value="SGD"/>
</dbReference>
<dbReference type="GO" id="GO:0006301">
    <property type="term" value="P:postreplication repair"/>
    <property type="evidence" value="ECO:0000315"/>
    <property type="project" value="SGD"/>
</dbReference>
<dbReference type="GO" id="GO:0070534">
    <property type="term" value="P:protein K63-linked ubiquitination"/>
    <property type="evidence" value="ECO:0000318"/>
    <property type="project" value="GO_Central"/>
</dbReference>
<dbReference type="GO" id="GO:0000209">
    <property type="term" value="P:protein polyubiquitination"/>
    <property type="evidence" value="ECO:0000314"/>
    <property type="project" value="SGD"/>
</dbReference>
<dbReference type="GO" id="GO:0044395">
    <property type="term" value="P:protein targeting to vacuolar membrane"/>
    <property type="evidence" value="ECO:0000315"/>
    <property type="project" value="SGD"/>
</dbReference>
<dbReference type="CDD" id="cd23807">
    <property type="entry name" value="UEV_UBE2V"/>
    <property type="match status" value="1"/>
</dbReference>
<dbReference type="FunFam" id="3.10.110.10:FF:000026">
    <property type="entry name" value="Ubiquitin-conjugating enzyme E2 variant"/>
    <property type="match status" value="1"/>
</dbReference>
<dbReference type="Gene3D" id="3.10.110.10">
    <property type="entry name" value="Ubiquitin Conjugating Enzyme"/>
    <property type="match status" value="1"/>
</dbReference>
<dbReference type="InterPro" id="IPR000608">
    <property type="entry name" value="UBQ-conjugat_E2_core"/>
</dbReference>
<dbReference type="InterPro" id="IPR016135">
    <property type="entry name" value="UBQ-conjugating_enzyme/RWD"/>
</dbReference>
<dbReference type="PANTHER" id="PTHR24068">
    <property type="entry name" value="UBIQUITIN-CONJUGATING ENZYME E2"/>
    <property type="match status" value="1"/>
</dbReference>
<dbReference type="Pfam" id="PF00179">
    <property type="entry name" value="UQ_con"/>
    <property type="match status" value="1"/>
</dbReference>
<dbReference type="SMART" id="SM00212">
    <property type="entry name" value="UBCc"/>
    <property type="match status" value="1"/>
</dbReference>
<dbReference type="SUPFAM" id="SSF54495">
    <property type="entry name" value="UBC-like"/>
    <property type="match status" value="1"/>
</dbReference>
<dbReference type="PROSITE" id="PS50127">
    <property type="entry name" value="UBC_2"/>
    <property type="match status" value="1"/>
</dbReference>
<name>MMS2_YEAST</name>
<reference key="1">
    <citation type="journal article" date="1998" name="Proc. Natl. Acad. Sci. U.S.A.">
        <title>MMS2, encoding a ubiquitin-conjugating-enzyme-like protein, is a member of the yeast error-free postreplication repair pathway.</title>
        <authorList>
            <person name="Broomfield S."/>
            <person name="Chow B.L."/>
            <person name="Xiao W."/>
        </authorList>
    </citation>
    <scope>NUCLEOTIDE SEQUENCE [GENOMIC DNA]</scope>
    <scope>CHARACTERIZATION</scope>
</reference>
<reference key="2">
    <citation type="journal article" date="1997" name="Yeast">
        <title>Sequence analysis of 203 kilobases from Saccharomyces cerevisiae chromosome VII.</title>
        <authorList>
            <person name="Rieger M."/>
            <person name="Brueckner M."/>
            <person name="Schaefer M."/>
            <person name="Mueller-Auer S."/>
        </authorList>
    </citation>
    <scope>NUCLEOTIDE SEQUENCE [GENOMIC DNA]</scope>
    <source>
        <strain>ATCC 204508 / S288c</strain>
    </source>
</reference>
<reference key="3">
    <citation type="journal article" date="1997" name="Nature">
        <title>The nucleotide sequence of Saccharomyces cerevisiae chromosome VII.</title>
        <authorList>
            <person name="Tettelin H."/>
            <person name="Agostoni-Carbone M.L."/>
            <person name="Albermann K."/>
            <person name="Albers M."/>
            <person name="Arroyo J."/>
            <person name="Backes U."/>
            <person name="Barreiros T."/>
            <person name="Bertani I."/>
            <person name="Bjourson A.J."/>
            <person name="Brueckner M."/>
            <person name="Bruschi C.V."/>
            <person name="Carignani G."/>
            <person name="Castagnoli L."/>
            <person name="Cerdan E."/>
            <person name="Clemente M.L."/>
            <person name="Coblenz A."/>
            <person name="Coglievina M."/>
            <person name="Coissac E."/>
            <person name="Defoor E."/>
            <person name="Del Bino S."/>
            <person name="Delius H."/>
            <person name="Delneri D."/>
            <person name="de Wergifosse P."/>
            <person name="Dujon B."/>
            <person name="Durand P."/>
            <person name="Entian K.-D."/>
            <person name="Eraso P."/>
            <person name="Escribano V."/>
            <person name="Fabiani L."/>
            <person name="Fartmann B."/>
            <person name="Feroli F."/>
            <person name="Feuermann M."/>
            <person name="Frontali L."/>
            <person name="Garcia-Gonzalez M."/>
            <person name="Garcia-Saez M.I."/>
            <person name="Goffeau A."/>
            <person name="Guerreiro P."/>
            <person name="Hani J."/>
            <person name="Hansen M."/>
            <person name="Hebling U."/>
            <person name="Hernandez K."/>
            <person name="Heumann K."/>
            <person name="Hilger F."/>
            <person name="Hofmann B."/>
            <person name="Indge K.J."/>
            <person name="James C.M."/>
            <person name="Klima R."/>
            <person name="Koetter P."/>
            <person name="Kramer B."/>
            <person name="Kramer W."/>
            <person name="Lauquin G."/>
            <person name="Leuther H."/>
            <person name="Louis E.J."/>
            <person name="Maillier E."/>
            <person name="Marconi A."/>
            <person name="Martegani E."/>
            <person name="Mazon M.J."/>
            <person name="Mazzoni C."/>
            <person name="McReynolds A.D.K."/>
            <person name="Melchioretto P."/>
            <person name="Mewes H.-W."/>
            <person name="Minenkova O."/>
            <person name="Mueller-Auer S."/>
            <person name="Nawrocki A."/>
            <person name="Netter P."/>
            <person name="Neu R."/>
            <person name="Nombela C."/>
            <person name="Oliver S.G."/>
            <person name="Panzeri L."/>
            <person name="Paoluzi S."/>
            <person name="Plevani P."/>
            <person name="Portetelle D."/>
            <person name="Portillo F."/>
            <person name="Potier S."/>
            <person name="Purnelle B."/>
            <person name="Rieger M."/>
            <person name="Riles L."/>
            <person name="Rinaldi T."/>
            <person name="Robben J."/>
            <person name="Rodrigues-Pousada C."/>
            <person name="Rodriguez-Belmonte E."/>
            <person name="Rodriguez-Torres A.M."/>
            <person name="Rose M."/>
            <person name="Ruzzi M."/>
            <person name="Saliola M."/>
            <person name="Sanchez-Perez M."/>
            <person name="Schaefer B."/>
            <person name="Schaefer M."/>
            <person name="Scharfe M."/>
            <person name="Schmidheini T."/>
            <person name="Schreer A."/>
            <person name="Skala J."/>
            <person name="Souciet J.-L."/>
            <person name="Steensma H.Y."/>
            <person name="Talla E."/>
            <person name="Thierry A."/>
            <person name="Vandenbol M."/>
            <person name="van der Aart Q.J.M."/>
            <person name="Van Dyck L."/>
            <person name="Vanoni M."/>
            <person name="Verhasselt P."/>
            <person name="Voet M."/>
            <person name="Volckaert G."/>
            <person name="Wambutt R."/>
            <person name="Watson M.D."/>
            <person name="Weber N."/>
            <person name="Wedler E."/>
            <person name="Wedler H."/>
            <person name="Wipfli P."/>
            <person name="Wolf K."/>
            <person name="Wright L.F."/>
            <person name="Zaccaria P."/>
            <person name="Zimmermann M."/>
            <person name="Zollner A."/>
            <person name="Kleine K."/>
        </authorList>
    </citation>
    <scope>NUCLEOTIDE SEQUENCE [LARGE SCALE GENOMIC DNA]</scope>
    <source>
        <strain>ATCC 204508 / S288c</strain>
    </source>
</reference>
<reference key="4">
    <citation type="journal article" date="2014" name="G3 (Bethesda)">
        <title>The reference genome sequence of Saccharomyces cerevisiae: Then and now.</title>
        <authorList>
            <person name="Engel S.R."/>
            <person name="Dietrich F.S."/>
            <person name="Fisk D.G."/>
            <person name="Binkley G."/>
            <person name="Balakrishnan R."/>
            <person name="Costanzo M.C."/>
            <person name="Dwight S.S."/>
            <person name="Hitz B.C."/>
            <person name="Karra K."/>
            <person name="Nash R.S."/>
            <person name="Weng S."/>
            <person name="Wong E.D."/>
            <person name="Lloyd P."/>
            <person name="Skrzypek M.S."/>
            <person name="Miyasato S.R."/>
            <person name="Simison M."/>
            <person name="Cherry J.M."/>
        </authorList>
    </citation>
    <scope>GENOME REANNOTATION</scope>
    <source>
        <strain>ATCC 204508 / S288c</strain>
    </source>
</reference>
<reference key="5">
    <citation type="journal article" date="1998" name="Nucleic Acids Res.">
        <title>The products of the yeast MMS2 and two human homologs (hMMS2 and CROC-1) define a structurally and functionally conserved Ubc-like protein family.</title>
        <authorList>
            <person name="Xiao W."/>
            <person name="Lin S.L."/>
            <person name="Broomfield S."/>
            <person name="Chow B.L."/>
            <person name="Wei Y.-F."/>
        </authorList>
    </citation>
    <scope>CHARACTERIZATION</scope>
</reference>
<reference key="6">
    <citation type="journal article" date="1999" name="Cell">
        <title>Noncanonical MMS2-encoded ubiquitin-conjugating enzyme functions in assembly of novel polyubiquitin chains for DNA repair.</title>
        <authorList>
            <person name="Hofmann R.M."/>
            <person name="Pickart C.M."/>
        </authorList>
    </citation>
    <scope>CHARACTERIZATION</scope>
</reference>
<reference key="7">
    <citation type="journal article" date="2003" name="Nature">
        <title>Global analysis of protein expression in yeast.</title>
        <authorList>
            <person name="Ghaemmaghami S."/>
            <person name="Huh W.-K."/>
            <person name="Bower K."/>
            <person name="Howson R.W."/>
            <person name="Belle A."/>
            <person name="Dephoure N."/>
            <person name="O'Shea E.K."/>
            <person name="Weissman J.S."/>
        </authorList>
    </citation>
    <scope>LEVEL OF PROTEIN EXPRESSION [LARGE SCALE ANALYSIS]</scope>
</reference>
<reference key="8">
    <citation type="journal article" date="2008" name="Mol. Cell. Proteomics">
        <title>A multidimensional chromatography technology for in-depth phosphoproteome analysis.</title>
        <authorList>
            <person name="Albuquerque C.P."/>
            <person name="Smolka M.B."/>
            <person name="Payne S.H."/>
            <person name="Bafna V."/>
            <person name="Eng J."/>
            <person name="Zhou H."/>
        </authorList>
    </citation>
    <scope>PHOSPHORYLATION [LARGE SCALE ANALYSIS] AT SER-71</scope>
    <scope>IDENTIFICATION BY MASS SPECTROMETRY [LARGE SCALE ANALYSIS]</scope>
</reference>
<reference key="9">
    <citation type="journal article" date="2001" name="Cell">
        <title>Molecular insights into polyubiquitin chain assembly: crystal structure of the Mms2/Ubc13 heterodimer.</title>
        <authorList>
            <person name="VanDemark A.P."/>
            <person name="Hofmann R.M."/>
            <person name="Tsui C."/>
            <person name="Pickart C.M."/>
            <person name="Wolberger C."/>
        </authorList>
    </citation>
    <scope>X-RAY CRYSTALLOGRAPHY (1.6 ANGSTROMS) IN COMPLEX WITH UBC13</scope>
    <scope>MUTAGENESIS OF PHE-8</scope>
</reference>
<protein>
    <recommendedName>
        <fullName>Ubiquitin-conjugating enzyme variant MMS2</fullName>
        <shortName>UEV MMS2</shortName>
    </recommendedName>
</protein>
<organism>
    <name type="scientific">Saccharomyces cerevisiae (strain ATCC 204508 / S288c)</name>
    <name type="common">Baker's yeast</name>
    <dbReference type="NCBI Taxonomy" id="559292"/>
    <lineage>
        <taxon>Eukaryota</taxon>
        <taxon>Fungi</taxon>
        <taxon>Dikarya</taxon>
        <taxon>Ascomycota</taxon>
        <taxon>Saccharomycotina</taxon>
        <taxon>Saccharomycetes</taxon>
        <taxon>Saccharomycetales</taxon>
        <taxon>Saccharomycetaceae</taxon>
        <taxon>Saccharomyces</taxon>
    </lineage>
</organism>
<comment type="function">
    <text>Has a role in the DNA error-free postreplication repair (PRR) pathway. Lacks catalytic activity by itself. The UBC13/MMS2 heterodimer catalyzes the synthesis of non-canonical poly-ubiquitin chains that are linked through 'Lys-63'.</text>
</comment>
<comment type="subunit">
    <text evidence="2">Heterodimer with UBC13.</text>
</comment>
<comment type="interaction">
    <interactant intactId="EBI-11035">
        <id>P53152</id>
    </interactant>
    <interactant intactId="EBI-19777">
        <id>P52490</id>
        <label>UBC13</label>
    </interactant>
    <organismsDiffer>false</organismsDiffer>
    <experiments>10</experiments>
</comment>
<comment type="miscellaneous">
    <text evidence="3">Present with 2760 molecules/cell in log phase SD medium.</text>
</comment>
<comment type="similarity">
    <text evidence="1">Belongs to the ubiquitin-conjugating enzyme family.</text>
</comment>
<evidence type="ECO:0000255" key="1">
    <source>
        <dbReference type="PROSITE-ProRule" id="PRU00388"/>
    </source>
</evidence>
<evidence type="ECO:0000269" key="2">
    <source>
    </source>
</evidence>
<evidence type="ECO:0000269" key="3">
    <source>
    </source>
</evidence>
<evidence type="ECO:0007744" key="4">
    <source>
    </source>
</evidence>
<evidence type="ECO:0007829" key="5">
    <source>
        <dbReference type="PDB" id="1JAT"/>
    </source>
</evidence>
<evidence type="ECO:0007829" key="6">
    <source>
        <dbReference type="PDB" id="2GMI"/>
    </source>
</evidence>
<gene>
    <name type="primary">MMS2</name>
    <name type="ordered locus">YGL087C</name>
</gene>
<proteinExistence type="evidence at protein level"/>